<dbReference type="EMBL" id="AK002045">
    <property type="protein sequence ID" value="BAA92052.1"/>
    <property type="status" value="ALT_INIT"/>
    <property type="molecule type" value="mRNA"/>
</dbReference>
<dbReference type="EMBL" id="AK124904">
    <property type="protein sequence ID" value="BAC85990.1"/>
    <property type="molecule type" value="mRNA"/>
</dbReference>
<dbReference type="EMBL" id="AK128492">
    <property type="protein sequence ID" value="BAC87464.1"/>
    <property type="status" value="ALT_INIT"/>
    <property type="molecule type" value="mRNA"/>
</dbReference>
<dbReference type="EMBL" id="BC013319">
    <property type="protein sequence ID" value="AAH13319.2"/>
    <property type="molecule type" value="mRNA"/>
</dbReference>
<dbReference type="EMBL" id="BX538322">
    <property type="protein sequence ID" value="CAD98096.1"/>
    <property type="status" value="ALT_SEQ"/>
    <property type="molecule type" value="mRNA"/>
</dbReference>
<dbReference type="EMBL" id="AB037783">
    <property type="protein sequence ID" value="BAA92600.1"/>
    <property type="status" value="ALT_FRAME"/>
    <property type="molecule type" value="mRNA"/>
</dbReference>
<dbReference type="CCDS" id="CCDS31878.1">
    <molecule id="Q6ZV73-1"/>
</dbReference>
<dbReference type="RefSeq" id="NP_060821.3">
    <molecule id="Q6ZV73-1"/>
    <property type="nucleotide sequence ID" value="NM_018351.3"/>
</dbReference>
<dbReference type="SMR" id="Q6ZV73"/>
<dbReference type="BioGRID" id="120899">
    <property type="interactions" value="46"/>
</dbReference>
<dbReference type="FunCoup" id="Q6ZV73">
    <property type="interactions" value="790"/>
</dbReference>
<dbReference type="IntAct" id="Q6ZV73">
    <property type="interactions" value="27"/>
</dbReference>
<dbReference type="MINT" id="Q6ZV73"/>
<dbReference type="STRING" id="9606.ENSP00000344446"/>
<dbReference type="GlyGen" id="Q6ZV73">
    <property type="glycosylation" value="1 site, 1 O-linked glycan (1 site)"/>
</dbReference>
<dbReference type="iPTMnet" id="Q6ZV73"/>
<dbReference type="PhosphoSitePlus" id="Q6ZV73"/>
<dbReference type="BioMuta" id="FGD6"/>
<dbReference type="DMDM" id="61213484"/>
<dbReference type="jPOST" id="Q6ZV73"/>
<dbReference type="MassIVE" id="Q6ZV73"/>
<dbReference type="PaxDb" id="9606-ENSP00000344446"/>
<dbReference type="PeptideAtlas" id="Q6ZV73"/>
<dbReference type="ProteomicsDB" id="68397">
    <molecule id="Q6ZV73-1"/>
</dbReference>
<dbReference type="ProteomicsDB" id="68398">
    <molecule id="Q6ZV73-2"/>
</dbReference>
<dbReference type="Antibodypedia" id="1926">
    <property type="antibodies" value="96 antibodies from 16 providers"/>
</dbReference>
<dbReference type="DNASU" id="55785"/>
<dbReference type="Ensembl" id="ENST00000343958.9">
    <molecule id="Q6ZV73-1"/>
    <property type="protein sequence ID" value="ENSP00000344446.4"/>
    <property type="gene ID" value="ENSG00000180263.14"/>
</dbReference>
<dbReference type="Ensembl" id="ENST00000546711.5">
    <molecule id="Q6ZV73-2"/>
    <property type="protein sequence ID" value="ENSP00000450342.1"/>
    <property type="gene ID" value="ENSG00000180263.14"/>
</dbReference>
<dbReference type="GeneID" id="55785"/>
<dbReference type="KEGG" id="hsa:55785"/>
<dbReference type="MANE-Select" id="ENST00000343958.9">
    <property type="protein sequence ID" value="ENSP00000344446.4"/>
    <property type="RefSeq nucleotide sequence ID" value="NM_018351.4"/>
    <property type="RefSeq protein sequence ID" value="NP_060821.3"/>
</dbReference>
<dbReference type="UCSC" id="uc001tdp.4">
    <molecule id="Q6ZV73-1"/>
    <property type="organism name" value="human"/>
</dbReference>
<dbReference type="AGR" id="HGNC:21740"/>
<dbReference type="CTD" id="55785"/>
<dbReference type="DisGeNET" id="55785"/>
<dbReference type="GeneCards" id="FGD6"/>
<dbReference type="HGNC" id="HGNC:21740">
    <property type="gene designation" value="FGD6"/>
</dbReference>
<dbReference type="HPA" id="ENSG00000180263">
    <property type="expression patterns" value="Low tissue specificity"/>
</dbReference>
<dbReference type="MIM" id="613520">
    <property type="type" value="gene"/>
</dbReference>
<dbReference type="neXtProt" id="NX_Q6ZV73"/>
<dbReference type="OpenTargets" id="ENSG00000180263"/>
<dbReference type="PharmGKB" id="PA134967436"/>
<dbReference type="VEuPathDB" id="HostDB:ENSG00000180263"/>
<dbReference type="eggNOG" id="KOG1729">
    <property type="taxonomic scope" value="Eukaryota"/>
</dbReference>
<dbReference type="GeneTree" id="ENSGT00940000156334"/>
<dbReference type="HOGENOM" id="CLU_004959_0_0_1"/>
<dbReference type="InParanoid" id="Q6ZV73"/>
<dbReference type="OMA" id="PMSSCKF"/>
<dbReference type="OrthoDB" id="245697at2759"/>
<dbReference type="PAN-GO" id="Q6ZV73">
    <property type="GO annotations" value="1 GO annotation based on evolutionary models"/>
</dbReference>
<dbReference type="PhylomeDB" id="Q6ZV73"/>
<dbReference type="TreeFam" id="TF316247"/>
<dbReference type="PathwayCommons" id="Q6ZV73"/>
<dbReference type="SignaLink" id="Q6ZV73"/>
<dbReference type="BioGRID-ORCS" id="55785">
    <property type="hits" value="15 hits in 1159 CRISPR screens"/>
</dbReference>
<dbReference type="ChiTaRS" id="FGD6">
    <property type="organism name" value="human"/>
</dbReference>
<dbReference type="GenomeRNAi" id="55785"/>
<dbReference type="Pharos" id="Q6ZV73">
    <property type="development level" value="Tbio"/>
</dbReference>
<dbReference type="PRO" id="PR:Q6ZV73"/>
<dbReference type="Proteomes" id="UP000005640">
    <property type="component" value="Chromosome 12"/>
</dbReference>
<dbReference type="RNAct" id="Q6ZV73">
    <property type="molecule type" value="protein"/>
</dbReference>
<dbReference type="Bgee" id="ENSG00000180263">
    <property type="expression patterns" value="Expressed in buccal mucosa cell and 137 other cell types or tissues"/>
</dbReference>
<dbReference type="ExpressionAtlas" id="Q6ZV73">
    <property type="expression patterns" value="baseline and differential"/>
</dbReference>
<dbReference type="GO" id="GO:0005737">
    <property type="term" value="C:cytoplasm"/>
    <property type="evidence" value="ECO:0000250"/>
    <property type="project" value="UniProtKB"/>
</dbReference>
<dbReference type="GO" id="GO:0005856">
    <property type="term" value="C:cytoskeleton"/>
    <property type="evidence" value="ECO:0007669"/>
    <property type="project" value="UniProtKB-SubCell"/>
</dbReference>
<dbReference type="GO" id="GO:0005794">
    <property type="term" value="C:Golgi apparatus"/>
    <property type="evidence" value="ECO:0000250"/>
    <property type="project" value="UniProtKB"/>
</dbReference>
<dbReference type="GO" id="GO:0030027">
    <property type="term" value="C:lamellipodium"/>
    <property type="evidence" value="ECO:0000250"/>
    <property type="project" value="UniProtKB"/>
</dbReference>
<dbReference type="GO" id="GO:0001726">
    <property type="term" value="C:ruffle"/>
    <property type="evidence" value="ECO:0000250"/>
    <property type="project" value="UniProtKB"/>
</dbReference>
<dbReference type="GO" id="GO:0005085">
    <property type="term" value="F:guanyl-nucleotide exchange factor activity"/>
    <property type="evidence" value="ECO:0000250"/>
    <property type="project" value="UniProtKB"/>
</dbReference>
<dbReference type="GO" id="GO:0031267">
    <property type="term" value="F:small GTPase binding"/>
    <property type="evidence" value="ECO:0000250"/>
    <property type="project" value="UniProtKB"/>
</dbReference>
<dbReference type="GO" id="GO:0008270">
    <property type="term" value="F:zinc ion binding"/>
    <property type="evidence" value="ECO:0007669"/>
    <property type="project" value="UniProtKB-KW"/>
</dbReference>
<dbReference type="GO" id="GO:0030036">
    <property type="term" value="P:actin cytoskeleton organization"/>
    <property type="evidence" value="ECO:0000250"/>
    <property type="project" value="UniProtKB"/>
</dbReference>
<dbReference type="GO" id="GO:0007010">
    <property type="term" value="P:cytoskeleton organization"/>
    <property type="evidence" value="ECO:0000250"/>
    <property type="project" value="UniProtKB"/>
</dbReference>
<dbReference type="GO" id="GO:0046847">
    <property type="term" value="P:filopodium assembly"/>
    <property type="evidence" value="ECO:0000250"/>
    <property type="project" value="UniProtKB"/>
</dbReference>
<dbReference type="GO" id="GO:0008360">
    <property type="term" value="P:regulation of cell shape"/>
    <property type="evidence" value="ECO:0000250"/>
    <property type="project" value="UniProtKB"/>
</dbReference>
<dbReference type="GO" id="GO:0043087">
    <property type="term" value="P:regulation of GTPase activity"/>
    <property type="evidence" value="ECO:0000250"/>
    <property type="project" value="UniProtKB"/>
</dbReference>
<dbReference type="CDD" id="cd15743">
    <property type="entry name" value="FYVE_FGD6"/>
    <property type="match status" value="1"/>
</dbReference>
<dbReference type="CDD" id="cd15793">
    <property type="entry name" value="PH1_FGD6"/>
    <property type="match status" value="1"/>
</dbReference>
<dbReference type="CDD" id="cd13237">
    <property type="entry name" value="PH2_FGD5_FGD6"/>
    <property type="match status" value="1"/>
</dbReference>
<dbReference type="CDD" id="cd00160">
    <property type="entry name" value="RhoGEF"/>
    <property type="match status" value="1"/>
</dbReference>
<dbReference type="FunFam" id="3.30.40.10:FF:000061">
    <property type="entry name" value="FYVE, RhoGEF and PH domain containing 1"/>
    <property type="match status" value="1"/>
</dbReference>
<dbReference type="FunFam" id="2.30.29.30:FF:000158">
    <property type="entry name" value="FYVE, RhoGEF and PH domain containing 6"/>
    <property type="match status" value="1"/>
</dbReference>
<dbReference type="FunFam" id="1.20.900.10:FF:000024">
    <property type="entry name" value="FYVE, RhoGEF and PH domain-containing protein 6"/>
    <property type="match status" value="1"/>
</dbReference>
<dbReference type="FunFam" id="2.30.29.30:FF:000209">
    <property type="entry name" value="FYVE, RhoGEF and PH domain-containing protein 6"/>
    <property type="match status" value="1"/>
</dbReference>
<dbReference type="Gene3D" id="1.20.900.10">
    <property type="entry name" value="Dbl homology (DH) domain"/>
    <property type="match status" value="1"/>
</dbReference>
<dbReference type="Gene3D" id="2.30.29.30">
    <property type="entry name" value="Pleckstrin-homology domain (PH domain)/Phosphotyrosine-binding domain (PTB)"/>
    <property type="match status" value="2"/>
</dbReference>
<dbReference type="Gene3D" id="3.30.40.10">
    <property type="entry name" value="Zinc/RING finger domain, C3HC4 (zinc finger)"/>
    <property type="match status" value="1"/>
</dbReference>
<dbReference type="InterPro" id="IPR035899">
    <property type="entry name" value="DBL_dom_sf"/>
</dbReference>
<dbReference type="InterPro" id="IPR000219">
    <property type="entry name" value="DH_dom"/>
</dbReference>
<dbReference type="InterPro" id="IPR037743">
    <property type="entry name" value="FGD6_N_PH"/>
</dbReference>
<dbReference type="InterPro" id="IPR051092">
    <property type="entry name" value="FYVE_RhoGEF_PH"/>
</dbReference>
<dbReference type="InterPro" id="IPR011993">
    <property type="entry name" value="PH-like_dom_sf"/>
</dbReference>
<dbReference type="InterPro" id="IPR001849">
    <property type="entry name" value="PH_domain"/>
</dbReference>
<dbReference type="InterPro" id="IPR000306">
    <property type="entry name" value="Znf_FYVE"/>
</dbReference>
<dbReference type="InterPro" id="IPR017455">
    <property type="entry name" value="Znf_FYVE-rel"/>
</dbReference>
<dbReference type="InterPro" id="IPR013083">
    <property type="entry name" value="Znf_RING/FYVE/PHD"/>
</dbReference>
<dbReference type="PANTHER" id="PTHR12673">
    <property type="entry name" value="FACIOGENITAL DYSPLASIA PROTEIN"/>
    <property type="match status" value="1"/>
</dbReference>
<dbReference type="PANTHER" id="PTHR12673:SF12">
    <property type="entry name" value="FYVE, RHOGEF AND PH DOMAIN-CONTAINING PROTEIN 6"/>
    <property type="match status" value="1"/>
</dbReference>
<dbReference type="Pfam" id="PF01363">
    <property type="entry name" value="FYVE"/>
    <property type="match status" value="1"/>
</dbReference>
<dbReference type="Pfam" id="PF00169">
    <property type="entry name" value="PH"/>
    <property type="match status" value="2"/>
</dbReference>
<dbReference type="Pfam" id="PF00621">
    <property type="entry name" value="RhoGEF"/>
    <property type="match status" value="1"/>
</dbReference>
<dbReference type="SMART" id="SM00064">
    <property type="entry name" value="FYVE"/>
    <property type="match status" value="1"/>
</dbReference>
<dbReference type="SMART" id="SM00233">
    <property type="entry name" value="PH"/>
    <property type="match status" value="2"/>
</dbReference>
<dbReference type="SMART" id="SM00325">
    <property type="entry name" value="RhoGEF"/>
    <property type="match status" value="1"/>
</dbReference>
<dbReference type="SUPFAM" id="SSF48065">
    <property type="entry name" value="DBL homology domain (DH-domain)"/>
    <property type="match status" value="1"/>
</dbReference>
<dbReference type="SUPFAM" id="SSF50729">
    <property type="entry name" value="PH domain-like"/>
    <property type="match status" value="2"/>
</dbReference>
<dbReference type="PROSITE" id="PS50010">
    <property type="entry name" value="DH_2"/>
    <property type="match status" value="1"/>
</dbReference>
<dbReference type="PROSITE" id="PS50003">
    <property type="entry name" value="PH_DOMAIN"/>
    <property type="match status" value="2"/>
</dbReference>
<dbReference type="PROSITE" id="PS50178">
    <property type="entry name" value="ZF_FYVE"/>
    <property type="match status" value="1"/>
</dbReference>
<comment type="function">
    <text evidence="1">May activate CDC42, a member of the Ras-like family of Rho- and Rac proteins, by exchanging bound GDP for free GTP. May play a role in regulating the actin cytoskeleton and cell shape (By similarity).</text>
</comment>
<comment type="interaction">
    <interactant intactId="EBI-3959469">
        <id>Q6ZV73</id>
    </interactant>
    <interactant intactId="EBI-306940">
        <id>Q04917</id>
        <label>YWHAH</label>
    </interactant>
    <organismsDiffer>false</organismsDiffer>
    <experiments>5</experiments>
</comment>
<comment type="subcellular location">
    <subcellularLocation>
        <location evidence="8">Cytoplasm</location>
    </subcellularLocation>
    <subcellularLocation>
        <location evidence="8">Cytoplasm</location>
        <location evidence="8">Cytoskeleton</location>
    </subcellularLocation>
</comment>
<comment type="alternative products">
    <event type="alternative splicing"/>
    <isoform>
        <id>Q6ZV73-1</id>
        <name>1</name>
        <sequence type="displayed"/>
    </isoform>
    <isoform>
        <id>Q6ZV73-2</id>
        <name>2</name>
        <sequence type="described" ref="VSP_013091 VSP_013092"/>
    </isoform>
</comment>
<comment type="sequence caution" evidence="8">
    <conflict type="erroneous initiation">
        <sequence resource="EMBL-CDS" id="BAA92052"/>
    </conflict>
</comment>
<comment type="sequence caution" evidence="8">
    <conflict type="frameshift">
        <sequence resource="EMBL-CDS" id="BAA92600"/>
    </conflict>
</comment>
<comment type="sequence caution" evidence="8">
    <conflict type="erroneous initiation">
        <sequence resource="EMBL-CDS" id="BAC87464"/>
    </conflict>
</comment>
<comment type="sequence caution" evidence="8">
    <conflict type="miscellaneous discrepancy">
        <sequence resource="EMBL-CDS" id="CAD98096"/>
    </conflict>
    <text>Contaminating sequence. Potential poly-A sequence.</text>
</comment>
<name>FGD6_HUMAN</name>
<gene>
    <name type="primary">FGD6</name>
    <name type="synonym">KIAA1362</name>
    <name type="synonym">ZFYVE24</name>
</gene>
<feature type="chain" id="PRO_0000080952" description="FYVE, RhoGEF and PH domain-containing protein 6">
    <location>
        <begin position="1"/>
        <end position="1430"/>
    </location>
</feature>
<feature type="domain" description="DH" evidence="3">
    <location>
        <begin position="871"/>
        <end position="1060"/>
    </location>
</feature>
<feature type="domain" description="PH 1" evidence="5">
    <location>
        <begin position="1089"/>
        <end position="1183"/>
    </location>
</feature>
<feature type="domain" description="PH 2" evidence="5">
    <location>
        <begin position="1333"/>
        <end position="1429"/>
    </location>
</feature>
<feature type="zinc finger region" description="FYVE-type" evidence="4">
    <location>
        <begin position="1222"/>
        <end position="1281"/>
    </location>
</feature>
<feature type="region of interest" description="Disordered" evidence="6">
    <location>
        <begin position="1"/>
        <end position="36"/>
    </location>
</feature>
<feature type="region of interest" description="Disordered" evidence="6">
    <location>
        <begin position="330"/>
        <end position="351"/>
    </location>
</feature>
<feature type="region of interest" description="Disordered" evidence="6">
    <location>
        <begin position="516"/>
        <end position="538"/>
    </location>
</feature>
<feature type="region of interest" description="Disordered" evidence="6">
    <location>
        <begin position="695"/>
        <end position="739"/>
    </location>
</feature>
<feature type="region of interest" description="Disordered" evidence="6">
    <location>
        <begin position="800"/>
        <end position="869"/>
    </location>
</feature>
<feature type="compositionally biased region" description="Low complexity" evidence="6">
    <location>
        <begin position="15"/>
        <end position="24"/>
    </location>
</feature>
<feature type="compositionally biased region" description="Polar residues" evidence="6">
    <location>
        <begin position="334"/>
        <end position="351"/>
    </location>
</feature>
<feature type="compositionally biased region" description="Basic and acidic residues" evidence="6">
    <location>
        <begin position="527"/>
        <end position="538"/>
    </location>
</feature>
<feature type="compositionally biased region" description="Polar residues" evidence="6">
    <location>
        <begin position="728"/>
        <end position="739"/>
    </location>
</feature>
<feature type="compositionally biased region" description="Acidic residues" evidence="6">
    <location>
        <begin position="831"/>
        <end position="847"/>
    </location>
</feature>
<feature type="compositionally biased region" description="Basic and acidic residues" evidence="6">
    <location>
        <begin position="851"/>
        <end position="868"/>
    </location>
</feature>
<feature type="binding site" evidence="4">
    <location>
        <position position="1228"/>
    </location>
    <ligand>
        <name>Zn(2+)</name>
        <dbReference type="ChEBI" id="CHEBI:29105"/>
        <label>1</label>
    </ligand>
</feature>
<feature type="binding site" evidence="4">
    <location>
        <position position="1231"/>
    </location>
    <ligand>
        <name>Zn(2+)</name>
        <dbReference type="ChEBI" id="CHEBI:29105"/>
        <label>1</label>
    </ligand>
</feature>
<feature type="binding site" evidence="4">
    <location>
        <position position="1244"/>
    </location>
    <ligand>
        <name>Zn(2+)</name>
        <dbReference type="ChEBI" id="CHEBI:29105"/>
        <label>2</label>
    </ligand>
</feature>
<feature type="binding site" evidence="4">
    <location>
        <position position="1247"/>
    </location>
    <ligand>
        <name>Zn(2+)</name>
        <dbReference type="ChEBI" id="CHEBI:29105"/>
        <label>2</label>
    </ligand>
</feature>
<feature type="binding site" evidence="4">
    <location>
        <position position="1252"/>
    </location>
    <ligand>
        <name>Zn(2+)</name>
        <dbReference type="ChEBI" id="CHEBI:29105"/>
        <label>1</label>
    </ligand>
</feature>
<feature type="binding site" evidence="4">
    <location>
        <position position="1255"/>
    </location>
    <ligand>
        <name>Zn(2+)</name>
        <dbReference type="ChEBI" id="CHEBI:29105"/>
        <label>1</label>
    </ligand>
</feature>
<feature type="binding site" evidence="4">
    <location>
        <position position="1273"/>
    </location>
    <ligand>
        <name>Zn(2+)</name>
        <dbReference type="ChEBI" id="CHEBI:29105"/>
        <label>2</label>
    </ligand>
</feature>
<feature type="binding site" evidence="4">
    <location>
        <position position="1276"/>
    </location>
    <ligand>
        <name>Zn(2+)</name>
        <dbReference type="ChEBI" id="CHEBI:29105"/>
        <label>2</label>
    </ligand>
</feature>
<feature type="modified residue" description="Phosphoserine" evidence="12">
    <location>
        <position position="231"/>
    </location>
</feature>
<feature type="modified residue" description="Phosphoserine" evidence="11 12">
    <location>
        <position position="515"/>
    </location>
</feature>
<feature type="modified residue" description="Phosphoserine" evidence="12">
    <location>
        <position position="554"/>
    </location>
</feature>
<feature type="modified residue" description="Phosphoserine" evidence="2">
    <location>
        <position position="605"/>
    </location>
</feature>
<feature type="modified residue" description="Phosphoserine" evidence="11 12">
    <location>
        <position position="692"/>
    </location>
</feature>
<feature type="modified residue" description="Phosphoserine" evidence="9 10 11 12">
    <location>
        <position position="721"/>
    </location>
</feature>
<feature type="modified residue" description="Phosphoserine" evidence="11 12">
    <location>
        <position position="1197"/>
    </location>
</feature>
<feature type="splice variant" id="VSP_013091" description="In isoform 2." evidence="7">
    <original>DVAAL</original>
    <variation>VRSEI</variation>
    <location>
        <begin position="1370"/>
        <end position="1374"/>
    </location>
</feature>
<feature type="splice variant" id="VSP_013092" description="In isoform 2." evidence="7">
    <location>
        <begin position="1375"/>
        <end position="1430"/>
    </location>
</feature>
<feature type="sequence variant" id="VAR_024286" description="In dbSNP:rs10507047.">
    <original>Q</original>
    <variation>R</variation>
    <location>
        <position position="257"/>
    </location>
</feature>
<feature type="sequence variant" id="VAR_051985" description="In dbSNP:rs3794255.">
    <original>E</original>
    <variation>K</variation>
    <location>
        <position position="1393"/>
    </location>
</feature>
<feature type="sequence conflict" description="In Ref. 3; CAD98096." evidence="8" ref="3">
    <original>S</original>
    <variation>P</variation>
    <location>
        <position position="832"/>
    </location>
</feature>
<feature type="sequence conflict" description="In Ref. 3; CAD98096." evidence="8" ref="3">
    <original>S</original>
    <variation>F</variation>
    <location>
        <position position="848"/>
    </location>
</feature>
<feature type="sequence conflict" description="In Ref. 1; BAC85990." evidence="8" ref="1">
    <original>Q</original>
    <variation>H</variation>
    <location>
        <position position="949"/>
    </location>
</feature>
<feature type="sequence conflict" description="In Ref. 2; AAH13319." evidence="8" ref="2">
    <original>Y</original>
    <variation>D</variation>
    <location>
        <position position="966"/>
    </location>
</feature>
<feature type="sequence conflict" description="In Ref. 2; AAH13319." evidence="8" ref="2">
    <original>A</original>
    <variation>T</variation>
    <location>
        <position position="992"/>
    </location>
</feature>
<feature type="sequence conflict" description="In Ref. 4; BAA92600." evidence="8" ref="4">
    <original>R</original>
    <variation>C</variation>
    <location>
        <position position="1002"/>
    </location>
</feature>
<feature type="sequence conflict" description="In Ref. 2; AAH13319." evidence="8" ref="2">
    <original>I</original>
    <variation>V</variation>
    <location>
        <position position="1051"/>
    </location>
</feature>
<feature type="sequence conflict" description="In Ref. 3; CAD98096." evidence="8" ref="3">
    <original>A</original>
    <variation>V</variation>
    <location>
        <position position="1115"/>
    </location>
</feature>
<evidence type="ECO:0000250" key="1"/>
<evidence type="ECO:0000250" key="2">
    <source>
        <dbReference type="UniProtKB" id="Q69ZL1"/>
    </source>
</evidence>
<evidence type="ECO:0000255" key="3">
    <source>
        <dbReference type="PROSITE-ProRule" id="PRU00062"/>
    </source>
</evidence>
<evidence type="ECO:0000255" key="4">
    <source>
        <dbReference type="PROSITE-ProRule" id="PRU00091"/>
    </source>
</evidence>
<evidence type="ECO:0000255" key="5">
    <source>
        <dbReference type="PROSITE-ProRule" id="PRU00145"/>
    </source>
</evidence>
<evidence type="ECO:0000256" key="6">
    <source>
        <dbReference type="SAM" id="MobiDB-lite"/>
    </source>
</evidence>
<evidence type="ECO:0000303" key="7">
    <source>
    </source>
</evidence>
<evidence type="ECO:0000305" key="8"/>
<evidence type="ECO:0007744" key="9">
    <source>
    </source>
</evidence>
<evidence type="ECO:0007744" key="10">
    <source>
    </source>
</evidence>
<evidence type="ECO:0007744" key="11">
    <source>
    </source>
</evidence>
<evidence type="ECO:0007744" key="12">
    <source>
    </source>
</evidence>
<accession>Q6ZV73</accession>
<accession>Q6ZR53</accession>
<accession>Q7Z2Z7</accession>
<accession>Q96D44</accession>
<accession>Q9NUR8</accession>
<accession>Q9P2I5</accession>
<keyword id="KW-0025">Alternative splicing</keyword>
<keyword id="KW-0963">Cytoplasm</keyword>
<keyword id="KW-0206">Cytoskeleton</keyword>
<keyword id="KW-0344">Guanine-nucleotide releasing factor</keyword>
<keyword id="KW-0479">Metal-binding</keyword>
<keyword id="KW-0597">Phosphoprotein</keyword>
<keyword id="KW-1267">Proteomics identification</keyword>
<keyword id="KW-1185">Reference proteome</keyword>
<keyword id="KW-0677">Repeat</keyword>
<keyword id="KW-0862">Zinc</keyword>
<keyword id="KW-0863">Zinc-finger</keyword>
<proteinExistence type="evidence at protein level"/>
<reference key="1">
    <citation type="journal article" date="2004" name="Nat. Genet.">
        <title>Complete sequencing and characterization of 21,243 full-length human cDNAs.</title>
        <authorList>
            <person name="Ota T."/>
            <person name="Suzuki Y."/>
            <person name="Nishikawa T."/>
            <person name="Otsuki T."/>
            <person name="Sugiyama T."/>
            <person name="Irie R."/>
            <person name="Wakamatsu A."/>
            <person name="Hayashi K."/>
            <person name="Sato H."/>
            <person name="Nagai K."/>
            <person name="Kimura K."/>
            <person name="Makita H."/>
            <person name="Sekine M."/>
            <person name="Obayashi M."/>
            <person name="Nishi T."/>
            <person name="Shibahara T."/>
            <person name="Tanaka T."/>
            <person name="Ishii S."/>
            <person name="Yamamoto J."/>
            <person name="Saito K."/>
            <person name="Kawai Y."/>
            <person name="Isono Y."/>
            <person name="Nakamura Y."/>
            <person name="Nagahari K."/>
            <person name="Murakami K."/>
            <person name="Yasuda T."/>
            <person name="Iwayanagi T."/>
            <person name="Wagatsuma M."/>
            <person name="Shiratori A."/>
            <person name="Sudo H."/>
            <person name="Hosoiri T."/>
            <person name="Kaku Y."/>
            <person name="Kodaira H."/>
            <person name="Kondo H."/>
            <person name="Sugawara M."/>
            <person name="Takahashi M."/>
            <person name="Kanda K."/>
            <person name="Yokoi T."/>
            <person name="Furuya T."/>
            <person name="Kikkawa E."/>
            <person name="Omura Y."/>
            <person name="Abe K."/>
            <person name="Kamihara K."/>
            <person name="Katsuta N."/>
            <person name="Sato K."/>
            <person name="Tanikawa M."/>
            <person name="Yamazaki M."/>
            <person name="Ninomiya K."/>
            <person name="Ishibashi T."/>
            <person name="Yamashita H."/>
            <person name="Murakawa K."/>
            <person name="Fujimori K."/>
            <person name="Tanai H."/>
            <person name="Kimata M."/>
            <person name="Watanabe M."/>
            <person name="Hiraoka S."/>
            <person name="Chiba Y."/>
            <person name="Ishida S."/>
            <person name="Ono Y."/>
            <person name="Takiguchi S."/>
            <person name="Watanabe S."/>
            <person name="Yosida M."/>
            <person name="Hotuta T."/>
            <person name="Kusano J."/>
            <person name="Kanehori K."/>
            <person name="Takahashi-Fujii A."/>
            <person name="Hara H."/>
            <person name="Tanase T.-O."/>
            <person name="Nomura Y."/>
            <person name="Togiya S."/>
            <person name="Komai F."/>
            <person name="Hara R."/>
            <person name="Takeuchi K."/>
            <person name="Arita M."/>
            <person name="Imose N."/>
            <person name="Musashino K."/>
            <person name="Yuuki H."/>
            <person name="Oshima A."/>
            <person name="Sasaki N."/>
            <person name="Aotsuka S."/>
            <person name="Yoshikawa Y."/>
            <person name="Matsunawa H."/>
            <person name="Ichihara T."/>
            <person name="Shiohata N."/>
            <person name="Sano S."/>
            <person name="Moriya S."/>
            <person name="Momiyama H."/>
            <person name="Satoh N."/>
            <person name="Takami S."/>
            <person name="Terashima Y."/>
            <person name="Suzuki O."/>
            <person name="Nakagawa S."/>
            <person name="Senoh A."/>
            <person name="Mizoguchi H."/>
            <person name="Goto Y."/>
            <person name="Shimizu F."/>
            <person name="Wakebe H."/>
            <person name="Hishigaki H."/>
            <person name="Watanabe T."/>
            <person name="Sugiyama A."/>
            <person name="Takemoto M."/>
            <person name="Kawakami B."/>
            <person name="Yamazaki M."/>
            <person name="Watanabe K."/>
            <person name="Kumagai A."/>
            <person name="Itakura S."/>
            <person name="Fukuzumi Y."/>
            <person name="Fujimori Y."/>
            <person name="Komiyama M."/>
            <person name="Tashiro H."/>
            <person name="Tanigami A."/>
            <person name="Fujiwara T."/>
            <person name="Ono T."/>
            <person name="Yamada K."/>
            <person name="Fujii Y."/>
            <person name="Ozaki K."/>
            <person name="Hirao M."/>
            <person name="Ohmori Y."/>
            <person name="Kawabata A."/>
            <person name="Hikiji T."/>
            <person name="Kobatake N."/>
            <person name="Inagaki H."/>
            <person name="Ikema Y."/>
            <person name="Okamoto S."/>
            <person name="Okitani R."/>
            <person name="Kawakami T."/>
            <person name="Noguchi S."/>
            <person name="Itoh T."/>
            <person name="Shigeta K."/>
            <person name="Senba T."/>
            <person name="Matsumura K."/>
            <person name="Nakajima Y."/>
            <person name="Mizuno T."/>
            <person name="Morinaga M."/>
            <person name="Sasaki M."/>
            <person name="Togashi T."/>
            <person name="Oyama M."/>
            <person name="Hata H."/>
            <person name="Watanabe M."/>
            <person name="Komatsu T."/>
            <person name="Mizushima-Sugano J."/>
            <person name="Satoh T."/>
            <person name="Shirai Y."/>
            <person name="Takahashi Y."/>
            <person name="Nakagawa K."/>
            <person name="Okumura K."/>
            <person name="Nagase T."/>
            <person name="Nomura N."/>
            <person name="Kikuchi H."/>
            <person name="Masuho Y."/>
            <person name="Yamashita R."/>
            <person name="Nakai K."/>
            <person name="Yada T."/>
            <person name="Nakamura Y."/>
            <person name="Ohara O."/>
            <person name="Isogai T."/>
            <person name="Sugano S."/>
        </authorList>
    </citation>
    <scope>NUCLEOTIDE SEQUENCE [LARGE SCALE MRNA] (ISOFORM 1)</scope>
    <source>
        <tissue>Hippocampus</tissue>
        <tissue>Placenta</tissue>
    </source>
</reference>
<reference key="2">
    <citation type="journal article" date="2004" name="Genome Res.">
        <title>The status, quality, and expansion of the NIH full-length cDNA project: the Mammalian Gene Collection (MGC).</title>
        <authorList>
            <consortium name="The MGC Project Team"/>
        </authorList>
    </citation>
    <scope>NUCLEOTIDE SEQUENCE [LARGE SCALE MRNA] OF 966-1430 (ISOFORM 2)</scope>
    <source>
        <tissue>Brain</tissue>
    </source>
</reference>
<reference key="3">
    <citation type="journal article" date="2007" name="BMC Genomics">
        <title>The full-ORF clone resource of the German cDNA consortium.</title>
        <authorList>
            <person name="Bechtel S."/>
            <person name="Rosenfelder H."/>
            <person name="Duda A."/>
            <person name="Schmidt C.P."/>
            <person name="Ernst U."/>
            <person name="Wellenreuther R."/>
            <person name="Mehrle A."/>
            <person name="Schuster C."/>
            <person name="Bahr A."/>
            <person name="Bloecker H."/>
            <person name="Heubner D."/>
            <person name="Hoerlein A."/>
            <person name="Michel G."/>
            <person name="Wedler H."/>
            <person name="Koehrer K."/>
            <person name="Ottenwaelder B."/>
            <person name="Poustka A."/>
            <person name="Wiemann S."/>
            <person name="Schupp I."/>
        </authorList>
    </citation>
    <scope>NUCLEOTIDE SEQUENCE [LARGE SCALE MRNA] OF 1-1206 (ISOFORM 1)</scope>
    <source>
        <tissue>Endothelial cell</tissue>
    </source>
</reference>
<reference key="4">
    <citation type="journal article" date="2000" name="DNA Res.">
        <title>Prediction of the coding sequences of unidentified human genes. XVI. The complete sequences of 150 new cDNA clones from brain which code for large proteins in vitro.</title>
        <authorList>
            <person name="Nagase T."/>
            <person name="Kikuno R."/>
            <person name="Ishikawa K."/>
            <person name="Hirosawa M."/>
            <person name="Ohara O."/>
        </authorList>
    </citation>
    <scope>NUCLEOTIDE SEQUENCE [LARGE SCALE MRNA] OF 669-1430 (ISOFORM 1)</scope>
    <source>
        <tissue>Brain</tissue>
    </source>
</reference>
<reference key="5">
    <citation type="journal article" date="2008" name="Proc. Natl. Acad. Sci. U.S.A.">
        <title>A quantitative atlas of mitotic phosphorylation.</title>
        <authorList>
            <person name="Dephoure N."/>
            <person name="Zhou C."/>
            <person name="Villen J."/>
            <person name="Beausoleil S.A."/>
            <person name="Bakalarski C.E."/>
            <person name="Elledge S.J."/>
            <person name="Gygi S.P."/>
        </authorList>
    </citation>
    <scope>PHOSPHORYLATION [LARGE SCALE ANALYSIS] AT SER-721</scope>
    <scope>IDENTIFICATION BY MASS SPECTROMETRY [LARGE SCALE ANALYSIS]</scope>
    <source>
        <tissue>Cervix carcinoma</tissue>
    </source>
</reference>
<reference key="6">
    <citation type="journal article" date="2010" name="Sci. Signal.">
        <title>Quantitative phosphoproteomics reveals widespread full phosphorylation site occupancy during mitosis.</title>
        <authorList>
            <person name="Olsen J.V."/>
            <person name="Vermeulen M."/>
            <person name="Santamaria A."/>
            <person name="Kumar C."/>
            <person name="Miller M.L."/>
            <person name="Jensen L.J."/>
            <person name="Gnad F."/>
            <person name="Cox J."/>
            <person name="Jensen T.S."/>
            <person name="Nigg E.A."/>
            <person name="Brunak S."/>
            <person name="Mann M."/>
        </authorList>
    </citation>
    <scope>PHOSPHORYLATION [LARGE SCALE ANALYSIS] AT SER-721</scope>
    <scope>IDENTIFICATION BY MASS SPECTROMETRY [LARGE SCALE ANALYSIS]</scope>
    <source>
        <tissue>Cervix carcinoma</tissue>
    </source>
</reference>
<reference key="7">
    <citation type="journal article" date="2011" name="Sci. Signal.">
        <title>System-wide temporal characterization of the proteome and phosphoproteome of human embryonic stem cell differentiation.</title>
        <authorList>
            <person name="Rigbolt K.T."/>
            <person name="Prokhorova T.A."/>
            <person name="Akimov V."/>
            <person name="Henningsen J."/>
            <person name="Johansen P.T."/>
            <person name="Kratchmarova I."/>
            <person name="Kassem M."/>
            <person name="Mann M."/>
            <person name="Olsen J.V."/>
            <person name="Blagoev B."/>
        </authorList>
    </citation>
    <scope>PHOSPHORYLATION [LARGE SCALE ANALYSIS] AT SER-515; SER-692; SER-721 AND SER-1197</scope>
    <scope>IDENTIFICATION BY MASS SPECTROMETRY [LARGE SCALE ANALYSIS]</scope>
</reference>
<reference key="8">
    <citation type="journal article" date="2013" name="J. Proteome Res.">
        <title>Toward a comprehensive characterization of a human cancer cell phosphoproteome.</title>
        <authorList>
            <person name="Zhou H."/>
            <person name="Di Palma S."/>
            <person name="Preisinger C."/>
            <person name="Peng M."/>
            <person name="Polat A.N."/>
            <person name="Heck A.J."/>
            <person name="Mohammed S."/>
        </authorList>
    </citation>
    <scope>PHOSPHORYLATION [LARGE SCALE ANALYSIS] AT SER-231; SER-515; SER-554; SER-692; SER-721 AND SER-1197</scope>
    <scope>IDENTIFICATION BY MASS SPECTROMETRY [LARGE SCALE ANALYSIS]</scope>
    <source>
        <tissue>Cervix carcinoma</tissue>
        <tissue>Erythroleukemia</tissue>
    </source>
</reference>
<sequence length="1430" mass="160816">MTSAAEIKKPPVAPKPKFVVANNKPAPPPIAPKPDIVISSVPQSTKKMKPAIAPKPKVLKTSPVREIGQSPSRKIMLNLEGHKQELAESTDNFNCKYEGNQSNDYISPMCSCSSECIHKLGHRENLCVKQLVLEPLEMNENLENSKIDETLTIKTRSKCDLYGEKAKNQGGVVLKASVLEEELKDALIHQMPPFISAQKHRPTDSPEMNGGCNSNGQFRIEFADLSPSPSSFEKVPDHHSCHLQLPSDECEHFETCQDDSEKSNNCFQSSELEALENGKRSTLISSDGVSKKSEVKDLGPLEIHLVPYTPKFPTPKPRKTRTARLLRQKCVDTPSESTEEPGNSDSSSSCLTENSLKINKISVLHQNVLCKQEQVDKMKLGNKSELNMESNSDAQDLVNSQKAMCNETTSFEKMAPSFDKDSNLSSDSTTVDGSSMSLAVDEGTGFIRCTVSMSLPKQLKLTCNEHLQSGRNLGVSAPQMQKESVIKEENSLRIVPKKPQRHSLPATGVLKKAASEELLEKSSYPSSEEKSSEKSLERNHLQHLCAQNRGVSSSFDMPKRASEKPVWKLPHPILPFSGNPEFLKSVTVSSNSEPSTALTKPRAKSLSAMDVEKCTKPCKDSTKKNSFKKLLSMKLSICFMKSDFQKFWSKSSQLGDTTTGHLSSGEQKGIESDWQGLLVGEEKRSKPIKAYSTENYSLESQKKRKKSRGQTSAANGLRAESLDDQMLSRESSSQAPYKSVTSLCAPEYENIRHYEEIPEYENLPFIMAIRKTQELEWQNSSSMEDADANVYEVEEPYEAPDGQLQLGPRHQHSSSGASQEEQNDLGLGDLPSDEEEIINSSDEDDVSSESSKGEPDPLEDKQDEDNGMKSKVHHIAKEIMSSEKVFVDVLKLLHIDFRDAVAHASRQLGKPVIEDRILNQILYYLPQLYELNRDLLKELEERMLHWTEQQRIADIFVKKGPYLKMYSTYIKEFDKNIALLDEQCKKNPGFAAVVREFEMSPRCANLALKHYLLKPVQRIPQYRLLLTDYLKNLIEDAGDYRDTQDALAVVIEVANHANDTMKQGDNFQKLMQIQYSLNGHHEIVQPGRVFLKEGILMKLSRKVMQPRMFFLFNDALLYTTPVQSGMYKLNNMLSLAGMKVRKPTQEAYQNELKIESVERSFILSASSATERDEWLEAISRAIEEYAKKRITFCPSRSLDEADSENKEEVSPLGSKAPIWIPDTRATMCMICTSEFTLTWRRHHCRACGKIVCQACSSNKYGLDYLKNQPARVCEHCFQELQKLDHQHSPRIGSPGNHKSPSSALSSVLHSIPSGRKQKKIPAALKEVSANTEDSSMSGYLYRSKGNKKPWKHFWFVIKNKVLYTYAASEDVAALESQPLLGFTVIQVKDENSESKVFQLLHKNMLFYVFKAEDAHSAQKWIEAFQEGTIL</sequence>
<organism>
    <name type="scientific">Homo sapiens</name>
    <name type="common">Human</name>
    <dbReference type="NCBI Taxonomy" id="9606"/>
    <lineage>
        <taxon>Eukaryota</taxon>
        <taxon>Metazoa</taxon>
        <taxon>Chordata</taxon>
        <taxon>Craniata</taxon>
        <taxon>Vertebrata</taxon>
        <taxon>Euteleostomi</taxon>
        <taxon>Mammalia</taxon>
        <taxon>Eutheria</taxon>
        <taxon>Euarchontoglires</taxon>
        <taxon>Primates</taxon>
        <taxon>Haplorrhini</taxon>
        <taxon>Catarrhini</taxon>
        <taxon>Hominidae</taxon>
        <taxon>Homo</taxon>
    </lineage>
</organism>
<protein>
    <recommendedName>
        <fullName>FYVE, RhoGEF and PH domain-containing protein 6</fullName>
    </recommendedName>
    <alternativeName>
        <fullName>Zinc finger FYVE domain-containing protein 24</fullName>
    </alternativeName>
</protein>